<protein>
    <recommendedName>
        <fullName>Putative flagella-related protein G</fullName>
    </recommendedName>
</protein>
<dbReference type="EMBL" id="U97040">
    <property type="protein sequence ID" value="AAB57831.1"/>
    <property type="molecule type" value="Genomic_DNA"/>
</dbReference>
<dbReference type="PIR" id="T44952">
    <property type="entry name" value="T44952"/>
</dbReference>
<dbReference type="SMR" id="O06640"/>
<dbReference type="OrthoDB" id="183655at2157"/>
<dbReference type="GO" id="GO:0097589">
    <property type="term" value="C:archaeal-type flagellum"/>
    <property type="evidence" value="ECO:0007669"/>
    <property type="project" value="UniProtKB-SubCell"/>
</dbReference>
<dbReference type="GO" id="GO:0005886">
    <property type="term" value="C:plasma membrane"/>
    <property type="evidence" value="ECO:0007669"/>
    <property type="project" value="UniProtKB-SubCell"/>
</dbReference>
<dbReference type="GO" id="GO:0005198">
    <property type="term" value="F:structural molecule activity"/>
    <property type="evidence" value="ECO:0007669"/>
    <property type="project" value="InterPro"/>
</dbReference>
<dbReference type="GO" id="GO:0097588">
    <property type="term" value="P:archaeal or bacterial-type flagellum-dependent cell motility"/>
    <property type="evidence" value="ECO:0007669"/>
    <property type="project" value="InterPro"/>
</dbReference>
<dbReference type="InterPro" id="IPR002774">
    <property type="entry name" value="Flagellin_arc"/>
</dbReference>
<dbReference type="PANTHER" id="PTHR42200">
    <property type="entry name" value="ARCHAEAL FLAGELLA-RELATED PROTEIN F-RELATED"/>
    <property type="match status" value="1"/>
</dbReference>
<dbReference type="PANTHER" id="PTHR42200:SF1">
    <property type="entry name" value="FLAGELLA-RELATED PROTEIN G-RELATED"/>
    <property type="match status" value="1"/>
</dbReference>
<dbReference type="Pfam" id="PF01917">
    <property type="entry name" value="Arch_flagellin"/>
    <property type="match status" value="1"/>
</dbReference>
<gene>
    <name type="primary">flaG</name>
</gene>
<feature type="chain" id="PRO_0000087274" description="Putative flagella-related protein G">
    <location>
        <begin position="1"/>
        <end position="150"/>
    </location>
</feature>
<feature type="transmembrane region" description="Helical" evidence="1">
    <location>
        <begin position="9"/>
        <end position="29"/>
    </location>
</feature>
<keyword id="KW-0974">Archaeal flagellum</keyword>
<keyword id="KW-1003">Cell membrane</keyword>
<keyword id="KW-0472">Membrane</keyword>
<keyword id="KW-0812">Transmembrane</keyword>
<keyword id="KW-1133">Transmembrane helix</keyword>
<organism>
    <name type="scientific">Methanococcus voltae</name>
    <dbReference type="NCBI Taxonomy" id="2188"/>
    <lineage>
        <taxon>Archaea</taxon>
        <taxon>Methanobacteriati</taxon>
        <taxon>Methanobacteriota</taxon>
        <taxon>Methanomada group</taxon>
        <taxon>Methanococci</taxon>
        <taxon>Methanococcales</taxon>
        <taxon>Methanococcaceae</taxon>
        <taxon>Methanococcus</taxon>
    </lineage>
</organism>
<sequence length="150" mass="16174">MASNVFSEIILFVSVLIITAAVSGILATSTHKISLGLEQRGDALSSQLTKDFEIINDPGYVLKNATDTTMIYLKNTGKSPITFDKEVISVLVDGNPVEISNTYVEGDSSVRVLGSSKVGKLHITYNTSGYHRFKVVTSEGIARTFTGEIV</sequence>
<reference key="1">
    <citation type="submission" date="1997-04" db="EMBL/GenBank/DDBJ databases">
        <authorList>
            <person name="Bayley D.P."/>
            <person name="Jarrell K.F."/>
        </authorList>
    </citation>
    <scope>NUCLEOTIDE SEQUENCE [GENOMIC DNA]</scope>
    <source>
        <strain>ATCC 33273 / DSM 1537 / NBRC 100457 / OCM 70 / PS</strain>
    </source>
</reference>
<name>FLAG_METVO</name>
<evidence type="ECO:0000255" key="1"/>
<evidence type="ECO:0000305" key="2"/>
<accession>O06640</accession>
<proteinExistence type="inferred from homology"/>
<comment type="subcellular location">
    <subcellularLocation>
        <location evidence="2">Cell membrane</location>
        <topology evidence="2">Single-pass membrane protein</topology>
    </subcellularLocation>
    <subcellularLocation>
        <location evidence="2">Archaeal flagellum</location>
    </subcellularLocation>
</comment>
<comment type="similarity">
    <text evidence="2">Belongs to the archaeal FlaG family.</text>
</comment>